<name>P5CR_TREPA</name>
<comment type="function">
    <text evidence="1 2">Catalyzes the reduction of 1-pyrroline-5-carboxylate (PCA) to L-proline.</text>
</comment>
<comment type="catalytic activity">
    <reaction evidence="1 2">
        <text>L-proline + NADP(+) = (S)-1-pyrroline-5-carboxylate + NADPH + 2 H(+)</text>
        <dbReference type="Rhea" id="RHEA:14109"/>
        <dbReference type="ChEBI" id="CHEBI:15378"/>
        <dbReference type="ChEBI" id="CHEBI:17388"/>
        <dbReference type="ChEBI" id="CHEBI:57783"/>
        <dbReference type="ChEBI" id="CHEBI:58349"/>
        <dbReference type="ChEBI" id="CHEBI:60039"/>
        <dbReference type="EC" id="1.5.1.2"/>
    </reaction>
</comment>
<comment type="catalytic activity">
    <reaction evidence="1 2">
        <text>L-proline + NAD(+) = (S)-1-pyrroline-5-carboxylate + NADH + 2 H(+)</text>
        <dbReference type="Rhea" id="RHEA:14105"/>
        <dbReference type="ChEBI" id="CHEBI:15378"/>
        <dbReference type="ChEBI" id="CHEBI:17388"/>
        <dbReference type="ChEBI" id="CHEBI:57540"/>
        <dbReference type="ChEBI" id="CHEBI:57945"/>
        <dbReference type="ChEBI" id="CHEBI:60039"/>
        <dbReference type="EC" id="1.5.1.2"/>
    </reaction>
</comment>
<comment type="pathway">
    <text evidence="1 2">Amino-acid biosynthesis; L-proline biosynthesis; L-proline from L-glutamate 5-semialdehyde: step 1/1.</text>
</comment>
<comment type="subcellular location">
    <subcellularLocation>
        <location evidence="1">Cytoplasm</location>
    </subcellularLocation>
</comment>
<comment type="similarity">
    <text evidence="1">Belongs to the pyrroline-5-carboxylate reductase family.</text>
</comment>
<proteinExistence type="evidence at protein level"/>
<reference key="1">
    <citation type="journal article" date="1990" name="J. Bacteriol.">
        <title>Complementation of an Escherichia coli proC mutation by a gene cloned from Treponema pallidum.</title>
        <authorList>
            <person name="Gherardini F.C."/>
            <person name="Hobbs M.M."/>
            <person name="Stamm L.V."/>
            <person name="Bassford P.J. Jr."/>
        </authorList>
    </citation>
    <scope>NUCLEOTIDE SEQUENCE [GENOMIC DNA]</scope>
    <scope>FUNCTION</scope>
    <scope>CATALYTIC ACTIVITY</scope>
    <scope>PATHWAY</scope>
    <source>
        <strain>Nichols</strain>
    </source>
</reference>
<reference key="2">
    <citation type="journal article" date="1998" name="Science">
        <title>Complete genome sequence of Treponema pallidum, the syphilis spirochete.</title>
        <authorList>
            <person name="Fraser C.M."/>
            <person name="Norris S.J."/>
            <person name="Weinstock G.M."/>
            <person name="White O."/>
            <person name="Sutton G.G."/>
            <person name="Dodson R.J."/>
            <person name="Gwinn M.L."/>
            <person name="Hickey E.K."/>
            <person name="Clayton R.A."/>
            <person name="Ketchum K.A."/>
            <person name="Sodergren E."/>
            <person name="Hardham J.M."/>
            <person name="McLeod M.P."/>
            <person name="Salzberg S.L."/>
            <person name="Peterson J.D."/>
            <person name="Khalak H.G."/>
            <person name="Richardson D.L."/>
            <person name="Howell J.K."/>
            <person name="Chidambaram M."/>
            <person name="Utterback T.R."/>
            <person name="McDonald L.A."/>
            <person name="Artiach P."/>
            <person name="Bowman C."/>
            <person name="Cotton M.D."/>
            <person name="Fujii C."/>
            <person name="Garland S.A."/>
            <person name="Hatch B."/>
            <person name="Horst K."/>
            <person name="Roberts K.M."/>
            <person name="Sandusky M."/>
            <person name="Weidman J.F."/>
            <person name="Smith H.O."/>
            <person name="Venter J.C."/>
        </authorList>
    </citation>
    <scope>NUCLEOTIDE SEQUENCE [LARGE SCALE GENOMIC DNA]</scope>
    <source>
        <strain>Nichols</strain>
    </source>
</reference>
<feature type="chain" id="PRO_0000187310" description="Pyrroline-5-carboxylate reductase">
    <location>
        <begin position="1"/>
        <end position="263"/>
    </location>
</feature>
<feature type="sequence conflict" description="In Ref. 1." evidence="3" ref="1">
    <original>MNVGFLGFGAMGRALAEGLVHAGALQAAQVYACALNQEKLRAQCTSLGIGACASVQELVQKSEWI</original>
    <variation>MTWDFWVLEQWDGRWQKGWCTQERCKRSSVRLCVKSGKVACAVYIFGHRCLRVSSGTGTEKVNGF</variation>
    <location>
        <begin position="1"/>
        <end position="65"/>
    </location>
</feature>
<feature type="sequence conflict" description="In Ref. 1; AAA27478." evidence="3" ref="1">
    <original>VLRDRQSFQGKVLISLA</original>
    <variation>GTARSPIFQESAISC</variation>
    <location>
        <begin position="77"/>
        <end position="93"/>
    </location>
</feature>
<feature type="sequence conflict" description="In Ref. 1." evidence="3" ref="1">
    <original>VRAAL</original>
    <variation>CRWLS</variation>
    <location>
        <begin position="256"/>
        <end position="260"/>
    </location>
</feature>
<accession>P27771</accession>
<accession>O83775</accession>
<keyword id="KW-0028">Amino-acid biosynthesis</keyword>
<keyword id="KW-0963">Cytoplasm</keyword>
<keyword id="KW-0521">NADP</keyword>
<keyword id="KW-0560">Oxidoreductase</keyword>
<keyword id="KW-0641">Proline biosynthesis</keyword>
<keyword id="KW-1185">Reference proteome</keyword>
<dbReference type="EC" id="1.5.1.2" evidence="1"/>
<dbReference type="EMBL" id="M73825">
    <property type="protein sequence ID" value="AAA27478.1"/>
    <property type="molecule type" value="Genomic_DNA"/>
</dbReference>
<dbReference type="EMBL" id="AE000520">
    <property type="protein sequence ID" value="AAC65760.1"/>
    <property type="molecule type" value="Genomic_DNA"/>
</dbReference>
<dbReference type="PIR" id="D71281">
    <property type="entry name" value="D71281"/>
</dbReference>
<dbReference type="RefSeq" id="WP_010882242.1">
    <property type="nucleotide sequence ID" value="NC_021490.2"/>
</dbReference>
<dbReference type="SMR" id="P27771"/>
<dbReference type="IntAct" id="P27771">
    <property type="interactions" value="5"/>
</dbReference>
<dbReference type="STRING" id="243276.TP_0797"/>
<dbReference type="EnsemblBacteria" id="AAC65760">
    <property type="protein sequence ID" value="AAC65760"/>
    <property type="gene ID" value="TP_0797"/>
</dbReference>
<dbReference type="GeneID" id="93876560"/>
<dbReference type="KEGG" id="tpa:TP_0797"/>
<dbReference type="KEGG" id="tpw:TPANIC_0797"/>
<dbReference type="eggNOG" id="COG0345">
    <property type="taxonomic scope" value="Bacteria"/>
</dbReference>
<dbReference type="HOGENOM" id="CLU_042344_3_1_12"/>
<dbReference type="OrthoDB" id="9805754at2"/>
<dbReference type="UniPathway" id="UPA00098">
    <property type="reaction ID" value="UER00361"/>
</dbReference>
<dbReference type="Proteomes" id="UP000000811">
    <property type="component" value="Chromosome"/>
</dbReference>
<dbReference type="GO" id="GO:0005737">
    <property type="term" value="C:cytoplasm"/>
    <property type="evidence" value="ECO:0007669"/>
    <property type="project" value="UniProtKB-SubCell"/>
</dbReference>
<dbReference type="GO" id="GO:0004735">
    <property type="term" value="F:pyrroline-5-carboxylate reductase activity"/>
    <property type="evidence" value="ECO:0007669"/>
    <property type="project" value="UniProtKB-UniRule"/>
</dbReference>
<dbReference type="GO" id="GO:0055129">
    <property type="term" value="P:L-proline biosynthetic process"/>
    <property type="evidence" value="ECO:0007669"/>
    <property type="project" value="UniProtKB-UniRule"/>
</dbReference>
<dbReference type="FunFam" id="1.10.3730.10:FF:000001">
    <property type="entry name" value="Pyrroline-5-carboxylate reductase"/>
    <property type="match status" value="1"/>
</dbReference>
<dbReference type="Gene3D" id="3.40.50.720">
    <property type="entry name" value="NAD(P)-binding Rossmann-like Domain"/>
    <property type="match status" value="1"/>
</dbReference>
<dbReference type="Gene3D" id="1.10.3730.10">
    <property type="entry name" value="ProC C-terminal domain-like"/>
    <property type="match status" value="1"/>
</dbReference>
<dbReference type="HAMAP" id="MF_01925">
    <property type="entry name" value="P5C_reductase"/>
    <property type="match status" value="1"/>
</dbReference>
<dbReference type="InterPro" id="IPR008927">
    <property type="entry name" value="6-PGluconate_DH-like_C_sf"/>
</dbReference>
<dbReference type="InterPro" id="IPR036291">
    <property type="entry name" value="NAD(P)-bd_dom_sf"/>
</dbReference>
<dbReference type="InterPro" id="IPR028939">
    <property type="entry name" value="P5C_Rdtase_cat_N"/>
</dbReference>
<dbReference type="InterPro" id="IPR053790">
    <property type="entry name" value="P5CR-like_CS"/>
</dbReference>
<dbReference type="InterPro" id="IPR029036">
    <property type="entry name" value="P5CR_dimer"/>
</dbReference>
<dbReference type="InterPro" id="IPR000304">
    <property type="entry name" value="Pyrroline-COOH_reductase"/>
</dbReference>
<dbReference type="NCBIfam" id="TIGR00112">
    <property type="entry name" value="proC"/>
    <property type="match status" value="1"/>
</dbReference>
<dbReference type="PANTHER" id="PTHR11645">
    <property type="entry name" value="PYRROLINE-5-CARBOXYLATE REDUCTASE"/>
    <property type="match status" value="1"/>
</dbReference>
<dbReference type="PANTHER" id="PTHR11645:SF0">
    <property type="entry name" value="PYRROLINE-5-CARBOXYLATE REDUCTASE 3"/>
    <property type="match status" value="1"/>
</dbReference>
<dbReference type="Pfam" id="PF03807">
    <property type="entry name" value="F420_oxidored"/>
    <property type="match status" value="1"/>
</dbReference>
<dbReference type="Pfam" id="PF14748">
    <property type="entry name" value="P5CR_dimer"/>
    <property type="match status" value="1"/>
</dbReference>
<dbReference type="PIRSF" id="PIRSF000193">
    <property type="entry name" value="Pyrrol-5-carb_rd"/>
    <property type="match status" value="1"/>
</dbReference>
<dbReference type="SUPFAM" id="SSF48179">
    <property type="entry name" value="6-phosphogluconate dehydrogenase C-terminal domain-like"/>
    <property type="match status" value="1"/>
</dbReference>
<dbReference type="SUPFAM" id="SSF51735">
    <property type="entry name" value="NAD(P)-binding Rossmann-fold domains"/>
    <property type="match status" value="1"/>
</dbReference>
<dbReference type="PROSITE" id="PS00521">
    <property type="entry name" value="P5CR"/>
    <property type="match status" value="1"/>
</dbReference>
<protein>
    <recommendedName>
        <fullName evidence="1">Pyrroline-5-carboxylate reductase</fullName>
        <shortName evidence="1">P5C reductase</shortName>
        <shortName evidence="1">P5CR</shortName>
        <ecNumber evidence="1">1.5.1.2</ecNumber>
    </recommendedName>
    <alternativeName>
        <fullName evidence="1">PCA reductase</fullName>
    </alternativeName>
</protein>
<organism>
    <name type="scientific">Treponema pallidum (strain Nichols)</name>
    <dbReference type="NCBI Taxonomy" id="243276"/>
    <lineage>
        <taxon>Bacteria</taxon>
        <taxon>Pseudomonadati</taxon>
        <taxon>Spirochaetota</taxon>
        <taxon>Spirochaetia</taxon>
        <taxon>Spirochaetales</taxon>
        <taxon>Treponemataceae</taxon>
        <taxon>Treponema</taxon>
    </lineage>
</organism>
<gene>
    <name evidence="1" type="primary">proC</name>
    <name type="ordered locus">TP_0797</name>
</gene>
<sequence length="263" mass="27645">MNVGFLGFGAMGRALAEGLVHAGALQAAQVYACALNQEKLRAQCTSLGIGACASVQELVQKSEWIFLAVKPSQISTVLRDRQSFQGKVLISLAAGMSCAAYEALFAADPHQGIRHLSLLPNLPCQVARGVIIAEARHTLHHDEHAALLAVLRTVAQVEVVDTAYFAIAGVIAGCAPAFAAQFIEALADAGVRYGLARDQAYRLAAHMLEGTAALIQHSGVHPAQLKDRVCSPAGSTIRGVLALEEQGLRRAVIHAVRAALSSS</sequence>
<evidence type="ECO:0000255" key="1">
    <source>
        <dbReference type="HAMAP-Rule" id="MF_01925"/>
    </source>
</evidence>
<evidence type="ECO:0000269" key="2">
    <source>
    </source>
</evidence>
<evidence type="ECO:0000305" key="3"/>